<dbReference type="EC" id="5.3.3.2" evidence="1"/>
<dbReference type="EMBL" id="CP000661">
    <property type="protein sequence ID" value="ABP69920.1"/>
    <property type="status" value="ALT_INIT"/>
    <property type="molecule type" value="Genomic_DNA"/>
</dbReference>
<dbReference type="SMR" id="A4WRA6"/>
<dbReference type="STRING" id="349102.Rsph17025_1019"/>
<dbReference type="KEGG" id="rsq:Rsph17025_1019"/>
<dbReference type="eggNOG" id="COG1443">
    <property type="taxonomic scope" value="Bacteria"/>
</dbReference>
<dbReference type="HOGENOM" id="CLU_060552_2_1_5"/>
<dbReference type="BioCyc" id="RSPH349102:G1G8M-1045-MONOMER"/>
<dbReference type="UniPathway" id="UPA00059">
    <property type="reaction ID" value="UER00104"/>
</dbReference>
<dbReference type="UniPathway" id="UPA00668"/>
<dbReference type="GO" id="GO:0005737">
    <property type="term" value="C:cytoplasm"/>
    <property type="evidence" value="ECO:0007669"/>
    <property type="project" value="UniProtKB-SubCell"/>
</dbReference>
<dbReference type="GO" id="GO:0004452">
    <property type="term" value="F:isopentenyl-diphosphate delta-isomerase activity"/>
    <property type="evidence" value="ECO:0007669"/>
    <property type="project" value="UniProtKB-UniRule"/>
</dbReference>
<dbReference type="GO" id="GO:0046872">
    <property type="term" value="F:metal ion binding"/>
    <property type="evidence" value="ECO:0007669"/>
    <property type="project" value="UniProtKB-KW"/>
</dbReference>
<dbReference type="GO" id="GO:0015995">
    <property type="term" value="P:chlorophyll biosynthetic process"/>
    <property type="evidence" value="ECO:0007669"/>
    <property type="project" value="UniProtKB-UniPathway"/>
</dbReference>
<dbReference type="GO" id="GO:0050992">
    <property type="term" value="P:dimethylallyl diphosphate biosynthetic process"/>
    <property type="evidence" value="ECO:0007669"/>
    <property type="project" value="UniProtKB-UniRule"/>
</dbReference>
<dbReference type="GO" id="GO:0009240">
    <property type="term" value="P:isopentenyl diphosphate biosynthetic process"/>
    <property type="evidence" value="ECO:0007669"/>
    <property type="project" value="TreeGrafter"/>
</dbReference>
<dbReference type="GO" id="GO:0015979">
    <property type="term" value="P:photosynthesis"/>
    <property type="evidence" value="ECO:0007669"/>
    <property type="project" value="UniProtKB-KW"/>
</dbReference>
<dbReference type="CDD" id="cd02885">
    <property type="entry name" value="NUDIX_IPP_Isomerase"/>
    <property type="match status" value="1"/>
</dbReference>
<dbReference type="Gene3D" id="3.90.79.10">
    <property type="entry name" value="Nucleoside Triphosphate Pyrophosphohydrolase"/>
    <property type="match status" value="1"/>
</dbReference>
<dbReference type="HAMAP" id="MF_00202">
    <property type="entry name" value="Idi"/>
    <property type="match status" value="1"/>
</dbReference>
<dbReference type="InterPro" id="IPR056375">
    <property type="entry name" value="Idi_bact"/>
</dbReference>
<dbReference type="InterPro" id="IPR011876">
    <property type="entry name" value="IsopentenylPP_isomerase_typ1"/>
</dbReference>
<dbReference type="InterPro" id="IPR015797">
    <property type="entry name" value="NUDIX_hydrolase-like_dom_sf"/>
</dbReference>
<dbReference type="InterPro" id="IPR000086">
    <property type="entry name" value="NUDIX_hydrolase_dom"/>
</dbReference>
<dbReference type="NCBIfam" id="TIGR02150">
    <property type="entry name" value="IPP_isom_1"/>
    <property type="match status" value="1"/>
</dbReference>
<dbReference type="NCBIfam" id="NF002995">
    <property type="entry name" value="PRK03759.1"/>
    <property type="match status" value="1"/>
</dbReference>
<dbReference type="PANTHER" id="PTHR10885">
    <property type="entry name" value="ISOPENTENYL-DIPHOSPHATE DELTA-ISOMERASE"/>
    <property type="match status" value="1"/>
</dbReference>
<dbReference type="PANTHER" id="PTHR10885:SF0">
    <property type="entry name" value="ISOPENTENYL-DIPHOSPHATE DELTA-ISOMERASE"/>
    <property type="match status" value="1"/>
</dbReference>
<dbReference type="Pfam" id="PF00293">
    <property type="entry name" value="NUDIX"/>
    <property type="match status" value="1"/>
</dbReference>
<dbReference type="PIRSF" id="PIRSF018427">
    <property type="entry name" value="Isopntndiph_ism"/>
    <property type="match status" value="1"/>
</dbReference>
<dbReference type="SUPFAM" id="SSF55811">
    <property type="entry name" value="Nudix"/>
    <property type="match status" value="1"/>
</dbReference>
<dbReference type="PROSITE" id="PS51462">
    <property type="entry name" value="NUDIX"/>
    <property type="match status" value="1"/>
</dbReference>
<gene>
    <name evidence="1" type="primary">idi</name>
    <name type="ordered locus">Rsph17025_1019</name>
</gene>
<protein>
    <recommendedName>
        <fullName evidence="1">Isopentenyl-diphosphate Delta-isomerase</fullName>
        <shortName evidence="1">IPP isomerase</shortName>
        <ecNumber evidence="1">5.3.3.2</ecNumber>
    </recommendedName>
    <alternativeName>
        <fullName evidence="1">IPP:DMAPP isomerase</fullName>
    </alternativeName>
    <alternativeName>
        <fullName evidence="1">Isopentenyl pyrophosphate isomerase</fullName>
    </alternativeName>
</protein>
<keyword id="KW-0149">Chlorophyll biosynthesis</keyword>
<keyword id="KW-0963">Cytoplasm</keyword>
<keyword id="KW-0413">Isomerase</keyword>
<keyword id="KW-0414">Isoprene biosynthesis</keyword>
<keyword id="KW-0460">Magnesium</keyword>
<keyword id="KW-0464">Manganese</keyword>
<keyword id="KW-0479">Metal-binding</keyword>
<keyword id="KW-0602">Photosynthesis</keyword>
<evidence type="ECO:0000255" key="1">
    <source>
        <dbReference type="HAMAP-Rule" id="MF_00202"/>
    </source>
</evidence>
<evidence type="ECO:0000305" key="2"/>
<organism>
    <name type="scientific">Cereibacter sphaeroides (strain ATCC 17025 / ATH 2.4.3)</name>
    <name type="common">Rhodobacter sphaeroides</name>
    <dbReference type="NCBI Taxonomy" id="349102"/>
    <lineage>
        <taxon>Bacteria</taxon>
        <taxon>Pseudomonadati</taxon>
        <taxon>Pseudomonadota</taxon>
        <taxon>Alphaproteobacteria</taxon>
        <taxon>Rhodobacterales</taxon>
        <taxon>Paracoccaceae</taxon>
        <taxon>Cereibacter</taxon>
    </lineage>
</organism>
<accession>A4WRA6</accession>
<sequence>MPEMVPAWVDGRLMPVEKLEAHQRGLRHKAISVFVMAGESVLIQRRAAGKYHTPGLWANTCCTHPRWGEAAADCAVRRLREELGITGLVTVFADQVEYRADVGSGLIEHEVVDIFVAEAPQDLPVAPDPEEVWETRWVDLHDLAREVEEHPERFTPWLRIYLADHMERIFGKLRVVQ</sequence>
<proteinExistence type="inferred from homology"/>
<comment type="function">
    <text evidence="1">Catalyzes the 1,3-allylic rearrangement of the homoallylic substrate isopentenyl (IPP) to its highly electrophilic allylic isomer, dimethylallyl diphosphate (DMAPP).</text>
</comment>
<comment type="catalytic activity">
    <reaction evidence="1">
        <text>isopentenyl diphosphate = dimethylallyl diphosphate</text>
        <dbReference type="Rhea" id="RHEA:23284"/>
        <dbReference type="ChEBI" id="CHEBI:57623"/>
        <dbReference type="ChEBI" id="CHEBI:128769"/>
        <dbReference type="EC" id="5.3.3.2"/>
    </reaction>
</comment>
<comment type="cofactor">
    <cofactor evidence="1">
        <name>Mg(2+)</name>
        <dbReference type="ChEBI" id="CHEBI:18420"/>
    </cofactor>
    <text evidence="1">Binds 1 Mg(2+) ion per subunit. The magnesium ion binds only when substrate is bound.</text>
</comment>
<comment type="cofactor">
    <cofactor evidence="1">
        <name>Mn(2+)</name>
        <dbReference type="ChEBI" id="CHEBI:29035"/>
    </cofactor>
    <text evidence="1">Binds 1 Mn(2+) ion per subunit.</text>
</comment>
<comment type="pathway">
    <text evidence="1">Isoprenoid biosynthesis; dimethylallyl diphosphate biosynthesis; dimethylallyl diphosphate from isopentenyl diphosphate: step 1/1.</text>
</comment>
<comment type="pathway">
    <text evidence="1">Porphyrin-containing compound metabolism; chlorophyll biosynthesis.</text>
</comment>
<comment type="subcellular location">
    <subcellularLocation>
        <location evidence="1">Cytoplasm</location>
    </subcellularLocation>
</comment>
<comment type="similarity">
    <text evidence="1">Belongs to the IPP isomerase type 1 family.</text>
</comment>
<comment type="sequence caution" evidence="2">
    <conflict type="erroneous initiation">
        <sequence resource="EMBL-CDS" id="ABP69920"/>
    </conflict>
</comment>
<name>IDI_CERS5</name>
<feature type="chain" id="PRO_0000325217" description="Isopentenyl-diphosphate Delta-isomerase">
    <location>
        <begin position="1"/>
        <end position="177"/>
    </location>
</feature>
<feature type="domain" description="Nudix hydrolase">
    <location>
        <begin position="26"/>
        <end position="160"/>
    </location>
</feature>
<feature type="active site" evidence="1">
    <location>
        <position position="62"/>
    </location>
</feature>
<feature type="active site" evidence="1">
    <location>
        <position position="110"/>
    </location>
</feature>
<feature type="binding site" evidence="1">
    <location>
        <position position="22"/>
    </location>
    <ligand>
        <name>Mn(2+)</name>
        <dbReference type="ChEBI" id="CHEBI:29035"/>
    </ligand>
</feature>
<feature type="binding site" evidence="1">
    <location>
        <position position="28"/>
    </location>
    <ligand>
        <name>Mn(2+)</name>
        <dbReference type="ChEBI" id="CHEBI:29035"/>
    </ligand>
</feature>
<feature type="binding site" evidence="1">
    <location>
        <position position="64"/>
    </location>
    <ligand>
        <name>Mn(2+)</name>
        <dbReference type="ChEBI" id="CHEBI:29035"/>
    </ligand>
</feature>
<feature type="binding site" evidence="1">
    <location>
        <position position="82"/>
    </location>
    <ligand>
        <name>Mg(2+)</name>
        <dbReference type="ChEBI" id="CHEBI:18420"/>
    </ligand>
</feature>
<feature type="binding site" evidence="1">
    <location>
        <position position="108"/>
    </location>
    <ligand>
        <name>Mn(2+)</name>
        <dbReference type="ChEBI" id="CHEBI:29035"/>
    </ligand>
</feature>
<feature type="binding site" evidence="1">
    <location>
        <position position="110"/>
    </location>
    <ligand>
        <name>Mn(2+)</name>
        <dbReference type="ChEBI" id="CHEBI:29035"/>
    </ligand>
</feature>
<reference key="1">
    <citation type="submission" date="2007-04" db="EMBL/GenBank/DDBJ databases">
        <title>Complete sequence of chromosome of Rhodobacter sphaeroides ATCC 17025.</title>
        <authorList>
            <consortium name="US DOE Joint Genome Institute"/>
            <person name="Copeland A."/>
            <person name="Lucas S."/>
            <person name="Lapidus A."/>
            <person name="Barry K."/>
            <person name="Detter J.C."/>
            <person name="Glavina del Rio T."/>
            <person name="Hammon N."/>
            <person name="Israni S."/>
            <person name="Dalin E."/>
            <person name="Tice H."/>
            <person name="Pitluck S."/>
            <person name="Chertkov O."/>
            <person name="Brettin T."/>
            <person name="Bruce D."/>
            <person name="Han C."/>
            <person name="Schmutz J."/>
            <person name="Larimer F."/>
            <person name="Land M."/>
            <person name="Hauser L."/>
            <person name="Kyrpides N."/>
            <person name="Kim E."/>
            <person name="Richardson P."/>
            <person name="Mackenzie C."/>
            <person name="Choudhary M."/>
            <person name="Donohue T.J."/>
            <person name="Kaplan S."/>
        </authorList>
    </citation>
    <scope>NUCLEOTIDE SEQUENCE [LARGE SCALE GENOMIC DNA]</scope>
    <source>
        <strain>ATCC 17025 / ATH 2.4.3</strain>
    </source>
</reference>